<name>UL24L_GLASK</name>
<protein>
    <recommendedName>
        <fullName>Ulvan lyase, long isoform</fullName>
        <ecNumber evidence="4">4.2.2.-</ecNumber>
    </recommendedName>
    <alternativeName>
        <fullName evidence="5">Ulvan lyase A</fullName>
    </alternativeName>
</protein>
<dbReference type="EC" id="4.2.2.-" evidence="4"/>
<dbReference type="EMBL" id="LC278381">
    <property type="protein sequence ID" value="BAY00693.1"/>
    <property type="molecule type" value="Genomic_DNA"/>
</dbReference>
<dbReference type="EMBL" id="BGNG01000006">
    <property type="protein sequence ID" value="GBL04955.1"/>
    <property type="molecule type" value="Genomic_DNA"/>
</dbReference>
<dbReference type="RefSeq" id="WP_373415186.1">
    <property type="nucleotide sequence ID" value="NZ_BGNG01000006.1"/>
</dbReference>
<dbReference type="SMR" id="A0A2Z6UD27"/>
<dbReference type="Proteomes" id="UP000247426">
    <property type="component" value="Unassembled WGS sequence"/>
</dbReference>
<dbReference type="GO" id="GO:0016829">
    <property type="term" value="F:lyase activity"/>
    <property type="evidence" value="ECO:0007669"/>
    <property type="project" value="UniProtKB-KW"/>
</dbReference>
<dbReference type="GO" id="GO:0046872">
    <property type="term" value="F:metal ion binding"/>
    <property type="evidence" value="ECO:0007669"/>
    <property type="project" value="UniProtKB-KW"/>
</dbReference>
<dbReference type="GO" id="GO:0000272">
    <property type="term" value="P:polysaccharide catabolic process"/>
    <property type="evidence" value="ECO:0007669"/>
    <property type="project" value="InterPro"/>
</dbReference>
<dbReference type="Gene3D" id="1.10.1330.10">
    <property type="entry name" value="Dockerin domain"/>
    <property type="match status" value="1"/>
</dbReference>
<dbReference type="Gene3D" id="2.60.40.10">
    <property type="entry name" value="Immunoglobulins"/>
    <property type="match status" value="4"/>
</dbReference>
<dbReference type="InterPro" id="IPR036439">
    <property type="entry name" value="Dockerin_dom_sf"/>
</dbReference>
<dbReference type="InterPro" id="IPR013783">
    <property type="entry name" value="Ig-like_fold"/>
</dbReference>
<dbReference type="Pfam" id="PF15892">
    <property type="entry name" value="BNR_4"/>
    <property type="match status" value="1"/>
</dbReference>
<dbReference type="SUPFAM" id="SSF63446">
    <property type="entry name" value="Type I dockerin domain"/>
    <property type="match status" value="1"/>
</dbReference>
<comment type="function">
    <text evidence="2 4">Ulvan lyase involved in ulvan degradation (PubMed:28684315). Ulvan is the main polysaccharide component of the Ulvales (green seaweed) cell wall. It is composed of disaccharide building blocks comprising 3-sulfated rhamnose (Rha3S) linked to D-glucuronic acid (GlcA), L-iduronic acid (IduA), or D-xylose (Xyl). Ulvan lyase catalyzes preferentially the endolytic cleavage of the glycosidic bond between Rha3S and the uronic acid GlcA, but not IduA, producing oligosaccharides that have unsaturated 4-deoxy-L-threo-hex-4-enopyranosiduronic acid (deltaUA) at the non-reducing end. The most abundant end products in the degradation of the ulvan polysaccharide were deltaUA-Rha3S disaccharides and deltaUA-Rha3S-IduA-Rha3S and deltaUA-Rha3S-Xyl-Rha3S tetrasaccharides (By similarity).</text>
</comment>
<comment type="biophysicochemical properties">
    <kinetics>
        <KM evidence="4">4.1 mg/ml for ulvan</KM>
        <Vmax evidence="4">60.6 umol/min/mg enzyme</Vmax>
    </kinetics>
</comment>
<comment type="similarity">
    <text evidence="6">Belongs to the polysaccharide lyase 24 family.</text>
</comment>
<evidence type="ECO:0000250" key="1">
    <source>
        <dbReference type="UniProtKB" id="A0A109PTH9"/>
    </source>
</evidence>
<evidence type="ECO:0000250" key="2">
    <source>
        <dbReference type="UniProtKB" id="P9WF07"/>
    </source>
</evidence>
<evidence type="ECO:0000255" key="3"/>
<evidence type="ECO:0000269" key="4">
    <source>
    </source>
</evidence>
<evidence type="ECO:0000303" key="5">
    <source>
    </source>
</evidence>
<evidence type="ECO:0000305" key="6"/>
<evidence type="ECO:0000312" key="7">
    <source>
        <dbReference type="EMBL" id="GBL04955.1"/>
    </source>
</evidence>
<sequence length="1009" mass="112723">MTAQKSKYFNRIMTMNTLLFSLLTVGFSQAYADVVLEKQVKITDDGLHFDGKDLNHGNIDSADPGEKYDFFFGPNISAHGDAVKTYKHYVFMTWYKGGKSERNVMLSRYNTQTQTIATIEFPHRHTGFRGNPLIGESHNTIGLAVSPNNGTIHMVYDLHAYDDNNHDGKFKDDFFRYSFSVENAADLPDDQFTLDKFVKDTSSISQGPDDYKHISMTGDIADKSNFARLTYPKFFTTTDGTLLLYMRLGGNNNGAYVFNRYDEETQTWSKFTKFNENNQKNFGNPYNWGLYGNMKYVNGKLRVGFQQRSSDNNDRYQYQNGVYYAYSDHPEGFGDWKNHKDDEITYPLVNSDEIKVLEPGDYISHQEANSVYIVGSFDWTVTKKGDVHFISKVRSTNRSRPDYEEEYLHSYKPAGADEFITTTDFTGASQIYTAGDNIYIVGLKNGRPYVERAKGGTNDFVRVYEATSGPVFDHGTLYIKDGKVYYYLMEKTSGNAMPLYLQIIDLDLESEANAPQVAFPSTSLTVEQGYEQLSLGIDATSSIEGRTIESVTLYLNDELVRTDTTVPYLFGHASKPHETGAMGWKDEHEPNPNPLGPGEHIFKAVAVDSEGDTGLATMRLTVQSNAPMVSFPTQLIEVDEGYEKLSVSVDASSSVEGRTIESVTLFINGEEVRTDTTIPYLWGHGSKPHETGAMGWREDHAPNPNPFLAGEYVFTAIATDSQGEQSETSMTLIVNGEATPPIVTWPNEVVTVTEGYKRLGITIEAEASSENATIESVTLYRNDELVRVDTKYKWNFGHSFAPYEFGAMGWLETHEPNPSPLLAGTHTFKVVAKDSTGLEGEAFMTLIVLPPAGPSISFDEPDIELMTGYESLSVSTYVATVNESVDIISVALFIDDVLVRENLEAPYVWGDANHPNELLSLEVGSYEFKAIARDTNDQVSEVSLLVSITLFGDFDGDNDVDRTDVRAFSSAIRSGEALDQRYDFNEDGVVDRSDTRGLTKICSRPRCAS</sequence>
<proteinExistence type="evidence at protein level"/>
<reference key="1">
    <citation type="journal article" date="2017" name="Biochem. Biophys. Res. Commun.">
        <title>Efficient renaturation of inclusion body proteins denatured by SDS.</title>
        <authorList>
            <person name="He C."/>
            <person name="Ohnishi K."/>
        </authorList>
    </citation>
    <scope>NUCLEOTIDE SEQUENCE [GENOMIC DNA]</scope>
    <scope>FUNCTION</scope>
    <scope>CATALYTIC ACTIVITY</scope>
    <scope>BIOPHYSICOCHEMICAL PROPERTIES</scope>
    <source>
        <strain>KUL10</strain>
    </source>
</reference>
<reference key="2">
    <citation type="submission" date="2018-05" db="EMBL/GenBank/DDBJ databases">
        <title>Draft genome sequence of a ulvan-utilizing bacterium, Glaciecola sp. KUL10.</title>
        <authorList>
            <person name="Ohnishi K."/>
            <person name="Mondal R."/>
            <person name="Kobayashi S."/>
            <person name="Takahashi R."/>
        </authorList>
    </citation>
    <scope>NUCLEOTIDE SEQUENCE [LARGE SCALE GENOMIC DNA]</scope>
    <source>
        <strain>KUL10</strain>
    </source>
</reference>
<gene>
    <name type="primary">ullA</name>
    <name evidence="7" type="ORF">KUL10_22730</name>
</gene>
<accession>A0A2Z6UD27</accession>
<accession>A0A1Z4F651</accession>
<feature type="signal peptide" evidence="3">
    <location>
        <begin position="1"/>
        <end position="32"/>
    </location>
</feature>
<feature type="chain" id="PRO_5016411667" description="Ulvan lyase, long isoform">
    <location>
        <begin position="33"/>
        <end position="1009"/>
    </location>
</feature>
<feature type="active site" description="Proton donor/acceptor" evidence="1">
    <location>
        <position position="138"/>
    </location>
</feature>
<feature type="binding site" evidence="1">
    <location>
        <begin position="137"/>
        <end position="138"/>
    </location>
    <ligand>
        <name>substrate</name>
    </ligand>
</feature>
<feature type="binding site" evidence="1">
    <location>
        <position position="200"/>
    </location>
    <ligand>
        <name>Ca(2+)</name>
        <dbReference type="ChEBI" id="CHEBI:29108"/>
        <label>1</label>
        <note>structural</note>
    </ligand>
</feature>
<feature type="binding site" evidence="1">
    <location>
        <position position="210"/>
    </location>
    <ligand>
        <name>Ca(2+)</name>
        <dbReference type="ChEBI" id="CHEBI:29108"/>
        <label>1</label>
        <note>structural</note>
    </ligand>
</feature>
<feature type="binding site" evidence="1">
    <location>
        <position position="212"/>
    </location>
    <ligand>
        <name>Ca(2+)</name>
        <dbReference type="ChEBI" id="CHEBI:29108"/>
        <label>1</label>
        <note>structural</note>
    </ligand>
</feature>
<feature type="binding site" evidence="1">
    <location>
        <position position="291"/>
    </location>
    <ligand>
        <name>substrate</name>
    </ligand>
</feature>
<feature type="binding site" evidence="1">
    <location>
        <position position="308"/>
    </location>
    <ligand>
        <name>substrate</name>
    </ligand>
</feature>
<feature type="binding site" evidence="1">
    <location>
        <position position="311"/>
    </location>
    <ligand>
        <name>Ca(2+)</name>
        <dbReference type="ChEBI" id="CHEBI:29108"/>
        <label>2</label>
        <note>structural</note>
    </ligand>
</feature>
<feature type="binding site" evidence="1">
    <location>
        <position position="314"/>
    </location>
    <ligand>
        <name>Ca(2+)</name>
        <dbReference type="ChEBI" id="CHEBI:29108"/>
        <label>2</label>
        <note>structural</note>
    </ligand>
</feature>
<feature type="binding site" evidence="1">
    <location>
        <position position="316"/>
    </location>
    <ligand>
        <name>Ca(2+)</name>
        <dbReference type="ChEBI" id="CHEBI:29108"/>
        <label>2</label>
        <note>structural</note>
    </ligand>
</feature>
<feature type="binding site" evidence="1">
    <location>
        <position position="372"/>
    </location>
    <ligand>
        <name>substrate</name>
    </ligand>
</feature>
<feature type="site" description="Neutralizes the sugar carboxylate group at subsite +1" evidence="1">
    <location>
        <position position="247"/>
    </location>
</feature>
<organism>
    <name type="scientific">Glaciecola sp. (strain KUL10)</name>
    <dbReference type="NCBI Taxonomy" id="2161813"/>
    <lineage>
        <taxon>Bacteria</taxon>
        <taxon>Pseudomonadati</taxon>
        <taxon>Pseudomonadota</taxon>
        <taxon>Gammaproteobacteria</taxon>
        <taxon>Alteromonadales</taxon>
        <taxon>Alteromonadaceae</taxon>
        <taxon>Glaciecola</taxon>
    </lineage>
</organism>
<keyword id="KW-0106">Calcium</keyword>
<keyword id="KW-0456">Lyase</keyword>
<keyword id="KW-0479">Metal-binding</keyword>
<keyword id="KW-1185">Reference proteome</keyword>
<keyword id="KW-0732">Signal</keyword>